<gene>
    <name evidence="1" type="primary">potA</name>
    <name type="ordered locus">SPO1609</name>
</gene>
<dbReference type="EC" id="7.6.2.11" evidence="1"/>
<dbReference type="EMBL" id="CP000031">
    <property type="protein sequence ID" value="AAV94896.1"/>
    <property type="molecule type" value="Genomic_DNA"/>
</dbReference>
<dbReference type="RefSeq" id="WP_011047346.1">
    <property type="nucleotide sequence ID" value="NC_003911.12"/>
</dbReference>
<dbReference type="SMR" id="Q5LT05"/>
<dbReference type="STRING" id="246200.SPO1609"/>
<dbReference type="PaxDb" id="246200-SPO1609"/>
<dbReference type="KEGG" id="sil:SPO1609"/>
<dbReference type="eggNOG" id="COG3842">
    <property type="taxonomic scope" value="Bacteria"/>
</dbReference>
<dbReference type="HOGENOM" id="CLU_000604_1_1_5"/>
<dbReference type="OrthoDB" id="9802264at2"/>
<dbReference type="Proteomes" id="UP000001023">
    <property type="component" value="Chromosome"/>
</dbReference>
<dbReference type="GO" id="GO:0043190">
    <property type="term" value="C:ATP-binding cassette (ABC) transporter complex"/>
    <property type="evidence" value="ECO:0007669"/>
    <property type="project" value="InterPro"/>
</dbReference>
<dbReference type="GO" id="GO:0015417">
    <property type="term" value="F:ABC-type polyamine transporter activity"/>
    <property type="evidence" value="ECO:0007669"/>
    <property type="project" value="UniProtKB-EC"/>
</dbReference>
<dbReference type="GO" id="GO:0005524">
    <property type="term" value="F:ATP binding"/>
    <property type="evidence" value="ECO:0007669"/>
    <property type="project" value="UniProtKB-KW"/>
</dbReference>
<dbReference type="GO" id="GO:0016887">
    <property type="term" value="F:ATP hydrolysis activity"/>
    <property type="evidence" value="ECO:0007669"/>
    <property type="project" value="InterPro"/>
</dbReference>
<dbReference type="FunFam" id="3.40.50.300:FF:000133">
    <property type="entry name" value="Spermidine/putrescine import ATP-binding protein PotA"/>
    <property type="match status" value="1"/>
</dbReference>
<dbReference type="Gene3D" id="2.40.50.100">
    <property type="match status" value="1"/>
</dbReference>
<dbReference type="Gene3D" id="2.40.50.140">
    <property type="entry name" value="Nucleic acid-binding proteins"/>
    <property type="match status" value="1"/>
</dbReference>
<dbReference type="Gene3D" id="3.40.50.300">
    <property type="entry name" value="P-loop containing nucleotide triphosphate hydrolases"/>
    <property type="match status" value="1"/>
</dbReference>
<dbReference type="InterPro" id="IPR003593">
    <property type="entry name" value="AAA+_ATPase"/>
</dbReference>
<dbReference type="InterPro" id="IPR050093">
    <property type="entry name" value="ABC_SmlMolc_Importer"/>
</dbReference>
<dbReference type="InterPro" id="IPR003439">
    <property type="entry name" value="ABC_transporter-like_ATP-bd"/>
</dbReference>
<dbReference type="InterPro" id="IPR017871">
    <property type="entry name" value="ABC_transporter-like_CS"/>
</dbReference>
<dbReference type="InterPro" id="IPR008995">
    <property type="entry name" value="Mo/tungstate-bd_C_term_dom"/>
</dbReference>
<dbReference type="InterPro" id="IPR012340">
    <property type="entry name" value="NA-bd_OB-fold"/>
</dbReference>
<dbReference type="InterPro" id="IPR027417">
    <property type="entry name" value="P-loop_NTPase"/>
</dbReference>
<dbReference type="InterPro" id="IPR005893">
    <property type="entry name" value="PotA-like"/>
</dbReference>
<dbReference type="InterPro" id="IPR013611">
    <property type="entry name" value="Transp-assoc_OB_typ2"/>
</dbReference>
<dbReference type="NCBIfam" id="TIGR01187">
    <property type="entry name" value="potA"/>
    <property type="match status" value="1"/>
</dbReference>
<dbReference type="PANTHER" id="PTHR42781">
    <property type="entry name" value="SPERMIDINE/PUTRESCINE IMPORT ATP-BINDING PROTEIN POTA"/>
    <property type="match status" value="1"/>
</dbReference>
<dbReference type="PANTHER" id="PTHR42781:SF4">
    <property type="entry name" value="SPERMIDINE_PUTRESCINE IMPORT ATP-BINDING PROTEIN POTA"/>
    <property type="match status" value="1"/>
</dbReference>
<dbReference type="Pfam" id="PF00005">
    <property type="entry name" value="ABC_tran"/>
    <property type="match status" value="1"/>
</dbReference>
<dbReference type="Pfam" id="PF08402">
    <property type="entry name" value="TOBE_2"/>
    <property type="match status" value="1"/>
</dbReference>
<dbReference type="SMART" id="SM00382">
    <property type="entry name" value="AAA"/>
    <property type="match status" value="1"/>
</dbReference>
<dbReference type="SUPFAM" id="SSF50331">
    <property type="entry name" value="MOP-like"/>
    <property type="match status" value="1"/>
</dbReference>
<dbReference type="SUPFAM" id="SSF52540">
    <property type="entry name" value="P-loop containing nucleoside triphosphate hydrolases"/>
    <property type="match status" value="1"/>
</dbReference>
<dbReference type="PROSITE" id="PS00211">
    <property type="entry name" value="ABC_TRANSPORTER_1"/>
    <property type="match status" value="1"/>
</dbReference>
<dbReference type="PROSITE" id="PS50893">
    <property type="entry name" value="ABC_TRANSPORTER_2"/>
    <property type="match status" value="1"/>
</dbReference>
<dbReference type="PROSITE" id="PS51305">
    <property type="entry name" value="POTA"/>
    <property type="match status" value="1"/>
</dbReference>
<comment type="function">
    <text evidence="1">Part of the ABC transporter complex PotABCD involved in spermidine/putrescine import. Responsible for energy coupling to the transport system.</text>
</comment>
<comment type="catalytic activity">
    <reaction evidence="1">
        <text>ATP + H2O + polyamine-[polyamine-binding protein]Side 1 = ADP + phosphate + polyamineSide 2 + [polyamine-binding protein]Side 1.</text>
        <dbReference type="EC" id="7.6.2.11"/>
    </reaction>
</comment>
<comment type="subunit">
    <text evidence="1">The complex is composed of two ATP-binding proteins (PotA), two transmembrane proteins (PotB and PotC) and a solute-binding protein (PotD).</text>
</comment>
<comment type="subcellular location">
    <subcellularLocation>
        <location evidence="1">Cell inner membrane</location>
        <topology evidence="1">Peripheral membrane protein</topology>
    </subcellularLocation>
</comment>
<comment type="similarity">
    <text evidence="1">Belongs to the ABC transporter superfamily. Spermidine/putrescine importer (TC 3.A.1.11.1) family.</text>
</comment>
<accession>Q5LT05</accession>
<reference key="1">
    <citation type="journal article" date="2004" name="Nature">
        <title>Genome sequence of Silicibacter pomeroyi reveals adaptations to the marine environment.</title>
        <authorList>
            <person name="Moran M.A."/>
            <person name="Buchan A."/>
            <person name="Gonzalez J.M."/>
            <person name="Heidelberg J.F."/>
            <person name="Whitman W.B."/>
            <person name="Kiene R.P."/>
            <person name="Henriksen J.R."/>
            <person name="King G.M."/>
            <person name="Belas R."/>
            <person name="Fuqua C."/>
            <person name="Brinkac L.M."/>
            <person name="Lewis M."/>
            <person name="Johri S."/>
            <person name="Weaver B."/>
            <person name="Pai G."/>
            <person name="Eisen J.A."/>
            <person name="Rahe E."/>
            <person name="Sheldon W.M."/>
            <person name="Ye W."/>
            <person name="Miller T.R."/>
            <person name="Carlton J."/>
            <person name="Rasko D.A."/>
            <person name="Paulsen I.T."/>
            <person name="Ren Q."/>
            <person name="Daugherty S.C."/>
            <person name="DeBoy R.T."/>
            <person name="Dodson R.J."/>
            <person name="Durkin A.S."/>
            <person name="Madupu R."/>
            <person name="Nelson W.C."/>
            <person name="Sullivan S.A."/>
            <person name="Rosovitz M.J."/>
            <person name="Haft D.H."/>
            <person name="Selengut J."/>
            <person name="Ward N."/>
        </authorList>
    </citation>
    <scope>NUCLEOTIDE SEQUENCE [LARGE SCALE GENOMIC DNA]</scope>
    <source>
        <strain>ATCC 700808 / DSM 15171 / DSS-3</strain>
    </source>
</reference>
<reference key="2">
    <citation type="journal article" date="2014" name="Stand. Genomic Sci.">
        <title>An updated genome annotation for the model marine bacterium Ruegeria pomeroyi DSS-3.</title>
        <authorList>
            <person name="Rivers A.R."/>
            <person name="Smith C.B."/>
            <person name="Moran M.A."/>
        </authorList>
    </citation>
    <scope>GENOME REANNOTATION</scope>
    <source>
        <strain>ATCC 700808 / DSM 15171 / DSS-3</strain>
    </source>
</reference>
<name>POTA_RUEPO</name>
<keyword id="KW-0067">ATP-binding</keyword>
<keyword id="KW-0997">Cell inner membrane</keyword>
<keyword id="KW-1003">Cell membrane</keyword>
<keyword id="KW-0472">Membrane</keyword>
<keyword id="KW-0547">Nucleotide-binding</keyword>
<keyword id="KW-1185">Reference proteome</keyword>
<keyword id="KW-1278">Translocase</keyword>
<keyword id="KW-0813">Transport</keyword>
<sequence length="366" mass="39837">MVPPTGERSLTKAISARALRKVYPGTPPVEALGGVDIDIADNEFFTLLGPSGCGKTTILRLIAGFEHPTSGSLDMFGQSLLDLPPYKRQINTVFQSYALFPHMSVAENIGFGLEMLGKPKSEIKSTVAEMMDLVQMSHLADRQTSQISGGQQQRVALARALAPKPRVLLLDEPLSALDFKLRKNMQLELKRLQTETGITFIFVTHDQEEALTMSDRIAVMSDGAIRQIGSPRDIYDHPADRFVADFIGDTNFLPADVIATEGERVSLRLGSGKTITAPARHAGGGRVTLAVRPEHARLEAEDSGLLPGVLSDAVYFGTDTHFHIALDDGTAFVLRQQNSPDTETRFAKGERVSVSFPGEVAQVLRD</sequence>
<organism>
    <name type="scientific">Ruegeria pomeroyi (strain ATCC 700808 / DSM 15171 / DSS-3)</name>
    <name type="common">Silicibacter pomeroyi</name>
    <dbReference type="NCBI Taxonomy" id="246200"/>
    <lineage>
        <taxon>Bacteria</taxon>
        <taxon>Pseudomonadati</taxon>
        <taxon>Pseudomonadota</taxon>
        <taxon>Alphaproteobacteria</taxon>
        <taxon>Rhodobacterales</taxon>
        <taxon>Roseobacteraceae</taxon>
        <taxon>Ruegeria</taxon>
    </lineage>
</organism>
<proteinExistence type="inferred from homology"/>
<evidence type="ECO:0000255" key="1">
    <source>
        <dbReference type="HAMAP-Rule" id="MF_01726"/>
    </source>
</evidence>
<protein>
    <recommendedName>
        <fullName evidence="1">Spermidine/putrescine import ATP-binding protein PotA</fullName>
        <ecNumber evidence="1">7.6.2.11</ecNumber>
    </recommendedName>
</protein>
<feature type="chain" id="PRO_0000286288" description="Spermidine/putrescine import ATP-binding protein PotA">
    <location>
        <begin position="1"/>
        <end position="366"/>
    </location>
</feature>
<feature type="domain" description="ABC transporter" evidence="1">
    <location>
        <begin position="14"/>
        <end position="247"/>
    </location>
</feature>
<feature type="binding site" evidence="1">
    <location>
        <begin position="49"/>
        <end position="56"/>
    </location>
    <ligand>
        <name>ATP</name>
        <dbReference type="ChEBI" id="CHEBI:30616"/>
    </ligand>
</feature>